<accession>Q2FXR4</accession>
<accession>O34092</accession>
<accession>Q9RL91</accession>
<protein>
    <recommendedName>
        <fullName>Glutamate-1-semialdehyde 2,1-aminomutase 1</fullName>
        <shortName>GSA 1</shortName>
        <ecNumber>5.4.3.8</ecNumber>
    </recommendedName>
    <alternativeName>
        <fullName>Glutamate-1-semialdehyde aminotransferase 1</fullName>
        <shortName>GSA-AT 1</shortName>
    </alternativeName>
</protein>
<feature type="chain" id="PRO_0000247015" description="Glutamate-1-semialdehyde 2,1-aminomutase 1">
    <location>
        <begin position="1"/>
        <end position="428"/>
    </location>
</feature>
<feature type="modified residue" description="N6-(pyridoxal phosphate)lysine" evidence="1">
    <location>
        <position position="267"/>
    </location>
</feature>
<feature type="sequence conflict" description="In Ref. 1; AAC45836." evidence="2" ref="1">
    <original>Q</original>
    <variation>T</variation>
    <location>
        <position position="370"/>
    </location>
</feature>
<evidence type="ECO:0000250" key="1"/>
<evidence type="ECO:0000305" key="2"/>
<dbReference type="EC" id="5.4.3.8"/>
<dbReference type="EMBL" id="U89396">
    <property type="protein sequence ID" value="AAC45836.1"/>
    <property type="molecule type" value="Genomic_DNA"/>
</dbReference>
<dbReference type="EMBL" id="CP000253">
    <property type="protein sequence ID" value="ABD30840.1"/>
    <property type="molecule type" value="Genomic_DNA"/>
</dbReference>
<dbReference type="RefSeq" id="WP_001270868.1">
    <property type="nucleotide sequence ID" value="NZ_LS483365.1"/>
</dbReference>
<dbReference type="RefSeq" id="YP_500276.1">
    <property type="nucleotide sequence ID" value="NC_007795.1"/>
</dbReference>
<dbReference type="SMR" id="Q2FXR4"/>
<dbReference type="STRING" id="93061.SAOUHSC_01771"/>
<dbReference type="PaxDb" id="1280-SAXN108_1694"/>
<dbReference type="GeneID" id="3919689"/>
<dbReference type="KEGG" id="sao:SAOUHSC_01771"/>
<dbReference type="PATRIC" id="fig|93061.5.peg.1615"/>
<dbReference type="eggNOG" id="COG0001">
    <property type="taxonomic scope" value="Bacteria"/>
</dbReference>
<dbReference type="HOGENOM" id="CLU_016922_1_5_9"/>
<dbReference type="OrthoDB" id="9807885at2"/>
<dbReference type="UniPathway" id="UPA00251">
    <property type="reaction ID" value="UER00317"/>
</dbReference>
<dbReference type="PRO" id="PR:Q2FXR4"/>
<dbReference type="Proteomes" id="UP000008816">
    <property type="component" value="Chromosome"/>
</dbReference>
<dbReference type="GO" id="GO:0005737">
    <property type="term" value="C:cytoplasm"/>
    <property type="evidence" value="ECO:0007669"/>
    <property type="project" value="UniProtKB-SubCell"/>
</dbReference>
<dbReference type="GO" id="GO:0042286">
    <property type="term" value="F:glutamate-1-semialdehyde 2,1-aminomutase activity"/>
    <property type="evidence" value="ECO:0007669"/>
    <property type="project" value="UniProtKB-UniRule"/>
</dbReference>
<dbReference type="GO" id="GO:0030170">
    <property type="term" value="F:pyridoxal phosphate binding"/>
    <property type="evidence" value="ECO:0007669"/>
    <property type="project" value="InterPro"/>
</dbReference>
<dbReference type="GO" id="GO:0008483">
    <property type="term" value="F:transaminase activity"/>
    <property type="evidence" value="ECO:0007669"/>
    <property type="project" value="InterPro"/>
</dbReference>
<dbReference type="GO" id="GO:0006782">
    <property type="term" value="P:protoporphyrinogen IX biosynthetic process"/>
    <property type="evidence" value="ECO:0007669"/>
    <property type="project" value="UniProtKB-UniRule"/>
</dbReference>
<dbReference type="CDD" id="cd00610">
    <property type="entry name" value="OAT_like"/>
    <property type="match status" value="1"/>
</dbReference>
<dbReference type="FunFam" id="3.40.640.10:FF:000021">
    <property type="entry name" value="Glutamate-1-semialdehyde 2,1-aminomutase"/>
    <property type="match status" value="1"/>
</dbReference>
<dbReference type="Gene3D" id="3.90.1150.10">
    <property type="entry name" value="Aspartate Aminotransferase, domain 1"/>
    <property type="match status" value="1"/>
</dbReference>
<dbReference type="Gene3D" id="3.40.640.10">
    <property type="entry name" value="Type I PLP-dependent aspartate aminotransferase-like (Major domain)"/>
    <property type="match status" value="1"/>
</dbReference>
<dbReference type="HAMAP" id="MF_00375">
    <property type="entry name" value="HemL_aminotrans_3"/>
    <property type="match status" value="1"/>
</dbReference>
<dbReference type="InterPro" id="IPR004639">
    <property type="entry name" value="4pyrrol_synth_GluAld_NH2Trfase"/>
</dbReference>
<dbReference type="InterPro" id="IPR005814">
    <property type="entry name" value="Aminotrans_3"/>
</dbReference>
<dbReference type="InterPro" id="IPR049704">
    <property type="entry name" value="Aminotrans_3_PPA_site"/>
</dbReference>
<dbReference type="InterPro" id="IPR015424">
    <property type="entry name" value="PyrdxlP-dep_Trfase"/>
</dbReference>
<dbReference type="InterPro" id="IPR015421">
    <property type="entry name" value="PyrdxlP-dep_Trfase_major"/>
</dbReference>
<dbReference type="InterPro" id="IPR015422">
    <property type="entry name" value="PyrdxlP-dep_Trfase_small"/>
</dbReference>
<dbReference type="NCBIfam" id="TIGR00713">
    <property type="entry name" value="hemL"/>
    <property type="match status" value="1"/>
</dbReference>
<dbReference type="NCBIfam" id="NF000818">
    <property type="entry name" value="PRK00062.1"/>
    <property type="match status" value="1"/>
</dbReference>
<dbReference type="PANTHER" id="PTHR43713">
    <property type="entry name" value="GLUTAMATE-1-SEMIALDEHYDE 2,1-AMINOMUTASE"/>
    <property type="match status" value="1"/>
</dbReference>
<dbReference type="PANTHER" id="PTHR43713:SF3">
    <property type="entry name" value="GLUTAMATE-1-SEMIALDEHYDE 2,1-AMINOMUTASE 1, CHLOROPLASTIC-RELATED"/>
    <property type="match status" value="1"/>
</dbReference>
<dbReference type="Pfam" id="PF00202">
    <property type="entry name" value="Aminotran_3"/>
    <property type="match status" value="1"/>
</dbReference>
<dbReference type="SUPFAM" id="SSF53383">
    <property type="entry name" value="PLP-dependent transferases"/>
    <property type="match status" value="1"/>
</dbReference>
<dbReference type="PROSITE" id="PS00600">
    <property type="entry name" value="AA_TRANSFER_CLASS_3"/>
    <property type="match status" value="1"/>
</dbReference>
<gene>
    <name type="primary">hemL1</name>
    <name type="synonym">hemL</name>
    <name type="ordered locus">SAOUHSC_01771</name>
</gene>
<sequence length="428" mass="46388">MRYTKSEEAMKVAETLMPGGVNSPVRAFKSVDTPAIFMDHGKGSKIYDIDGNEYIDYVLSWGPLILGHRDPQVISHLHEAIDKGTSFGASTLLENKLAQLVIDRVPSIEKVRMVSSGTEATLDTLRLARGYTGRNKIVKFEGCYHGHSDSLLIKAGSGVATLGLPDSPGVPEGIAKNTITVPYNDLDALKIAFEKFGNDIAGVIVEPVAGNMGVVPPIEGFLQGLRDITTEYGALLIFDEVMTGFRVGYHCAQGYFGVTPDLTCLGKVIGGGLPVGAFGGKKEIMDHIAPLGNIYQAGTLSGNPLAMTSGYETLSQLTPETYEYFNMLGDILEDGLKRVFAKHNVPITVNRAGSMIGYFLNEGPVTNFEQANKSDLKLFAEMYREMAKEGVFLPPSQFEGTFLSTAHTKEDIEKTIQAFDTALSRIVK</sequence>
<proteinExistence type="inferred from homology"/>
<name>GSA1_STAA8</name>
<organism>
    <name type="scientific">Staphylococcus aureus (strain NCTC 8325 / PS 47)</name>
    <dbReference type="NCBI Taxonomy" id="93061"/>
    <lineage>
        <taxon>Bacteria</taxon>
        <taxon>Bacillati</taxon>
        <taxon>Bacillota</taxon>
        <taxon>Bacilli</taxon>
        <taxon>Bacillales</taxon>
        <taxon>Staphylococcaceae</taxon>
        <taxon>Staphylococcus</taxon>
    </lineage>
</organism>
<keyword id="KW-0963">Cytoplasm</keyword>
<keyword id="KW-0413">Isomerase</keyword>
<keyword id="KW-0627">Porphyrin biosynthesis</keyword>
<keyword id="KW-0663">Pyridoxal phosphate</keyword>
<keyword id="KW-1185">Reference proteome</keyword>
<comment type="catalytic activity">
    <reaction>
        <text>(S)-4-amino-5-oxopentanoate = 5-aminolevulinate</text>
        <dbReference type="Rhea" id="RHEA:14265"/>
        <dbReference type="ChEBI" id="CHEBI:57501"/>
        <dbReference type="ChEBI" id="CHEBI:356416"/>
        <dbReference type="EC" id="5.4.3.8"/>
    </reaction>
</comment>
<comment type="cofactor">
    <cofactor evidence="1">
        <name>pyridoxal 5'-phosphate</name>
        <dbReference type="ChEBI" id="CHEBI:597326"/>
    </cofactor>
</comment>
<comment type="pathway">
    <text>Porphyrin-containing compound metabolism; protoporphyrin-IX biosynthesis; 5-aminolevulinate from L-glutamyl-tRNA(Glu): step 2/2.</text>
</comment>
<comment type="subunit">
    <text evidence="1">Homodimer.</text>
</comment>
<comment type="subcellular location">
    <subcellularLocation>
        <location evidence="2">Cytoplasm</location>
    </subcellularLocation>
</comment>
<comment type="similarity">
    <text evidence="2">Belongs to the class-III pyridoxal-phosphate-dependent aminotransferase family. HemL subfamily.</text>
</comment>
<reference key="1">
    <citation type="journal article" date="1997" name="Gene">
        <title>Isolation of the Staphylococcus aureus hemCDBL gene cluster coding for early steps in heme biosynthesis.</title>
        <authorList>
            <person name="Kafala B."/>
            <person name="Sasarman A."/>
        </authorList>
    </citation>
    <scope>NUCLEOTIDE SEQUENCE [GENOMIC DNA]</scope>
</reference>
<reference key="2">
    <citation type="book" date="2006" name="Gram positive pathogens, 2nd edition">
        <title>The Staphylococcus aureus NCTC 8325 genome.</title>
        <editorList>
            <person name="Fischetti V."/>
            <person name="Novick R."/>
            <person name="Ferretti J."/>
            <person name="Portnoy D."/>
            <person name="Rood J."/>
        </editorList>
        <authorList>
            <person name="Gillaspy A.F."/>
            <person name="Worrell V."/>
            <person name="Orvis J."/>
            <person name="Roe B.A."/>
            <person name="Dyer D.W."/>
            <person name="Iandolo J.J."/>
        </authorList>
    </citation>
    <scope>NUCLEOTIDE SEQUENCE [LARGE SCALE GENOMIC DNA]</scope>
    <source>
        <strain>NCTC 8325 / PS 47</strain>
    </source>
</reference>